<organism>
    <name type="scientific">Thermotoga petrophila (strain ATCC BAA-488 / DSM 13995 / JCM 10881 / RKU-1)</name>
    <dbReference type="NCBI Taxonomy" id="390874"/>
    <lineage>
        <taxon>Bacteria</taxon>
        <taxon>Thermotogati</taxon>
        <taxon>Thermotogota</taxon>
        <taxon>Thermotogae</taxon>
        <taxon>Thermotogales</taxon>
        <taxon>Thermotogaceae</taxon>
        <taxon>Thermotoga</taxon>
    </lineage>
</organism>
<dbReference type="EC" id="2.4.2.9" evidence="1"/>
<dbReference type="EMBL" id="CP000702">
    <property type="protein sequence ID" value="ABQ46237.1"/>
    <property type="molecule type" value="Genomic_DNA"/>
</dbReference>
<dbReference type="RefSeq" id="WP_011942891.1">
    <property type="nucleotide sequence ID" value="NC_009486.1"/>
</dbReference>
<dbReference type="SMR" id="A5IJ64"/>
<dbReference type="STRING" id="390874.Tpet_0208"/>
<dbReference type="KEGG" id="tpt:Tpet_0208"/>
<dbReference type="eggNOG" id="COG0035">
    <property type="taxonomic scope" value="Bacteria"/>
</dbReference>
<dbReference type="HOGENOM" id="CLU_067096_2_2_0"/>
<dbReference type="UniPathway" id="UPA00574">
    <property type="reaction ID" value="UER00636"/>
</dbReference>
<dbReference type="Proteomes" id="UP000006558">
    <property type="component" value="Chromosome"/>
</dbReference>
<dbReference type="GO" id="GO:0005525">
    <property type="term" value="F:GTP binding"/>
    <property type="evidence" value="ECO:0007669"/>
    <property type="project" value="UniProtKB-KW"/>
</dbReference>
<dbReference type="GO" id="GO:0000287">
    <property type="term" value="F:magnesium ion binding"/>
    <property type="evidence" value="ECO:0007669"/>
    <property type="project" value="UniProtKB-UniRule"/>
</dbReference>
<dbReference type="GO" id="GO:0004845">
    <property type="term" value="F:uracil phosphoribosyltransferase activity"/>
    <property type="evidence" value="ECO:0007669"/>
    <property type="project" value="UniProtKB-UniRule"/>
</dbReference>
<dbReference type="GO" id="GO:0044206">
    <property type="term" value="P:UMP salvage"/>
    <property type="evidence" value="ECO:0007669"/>
    <property type="project" value="UniProtKB-UniRule"/>
</dbReference>
<dbReference type="GO" id="GO:0006223">
    <property type="term" value="P:uracil salvage"/>
    <property type="evidence" value="ECO:0007669"/>
    <property type="project" value="InterPro"/>
</dbReference>
<dbReference type="CDD" id="cd06223">
    <property type="entry name" value="PRTases_typeI"/>
    <property type="match status" value="1"/>
</dbReference>
<dbReference type="FunFam" id="3.40.50.2020:FF:000003">
    <property type="entry name" value="Uracil phosphoribosyltransferase"/>
    <property type="match status" value="1"/>
</dbReference>
<dbReference type="Gene3D" id="3.40.50.2020">
    <property type="match status" value="1"/>
</dbReference>
<dbReference type="HAMAP" id="MF_01218_B">
    <property type="entry name" value="Upp_B"/>
    <property type="match status" value="1"/>
</dbReference>
<dbReference type="InterPro" id="IPR000836">
    <property type="entry name" value="PRibTrfase_dom"/>
</dbReference>
<dbReference type="InterPro" id="IPR029057">
    <property type="entry name" value="PRTase-like"/>
</dbReference>
<dbReference type="InterPro" id="IPR034332">
    <property type="entry name" value="Upp_B"/>
</dbReference>
<dbReference type="InterPro" id="IPR050054">
    <property type="entry name" value="UPRTase/APRTase"/>
</dbReference>
<dbReference type="InterPro" id="IPR005765">
    <property type="entry name" value="Ura_phspho_trans"/>
</dbReference>
<dbReference type="NCBIfam" id="NF001097">
    <property type="entry name" value="PRK00129.1"/>
    <property type="match status" value="1"/>
</dbReference>
<dbReference type="NCBIfam" id="TIGR01091">
    <property type="entry name" value="upp"/>
    <property type="match status" value="1"/>
</dbReference>
<dbReference type="PANTHER" id="PTHR32315">
    <property type="entry name" value="ADENINE PHOSPHORIBOSYLTRANSFERASE"/>
    <property type="match status" value="1"/>
</dbReference>
<dbReference type="PANTHER" id="PTHR32315:SF4">
    <property type="entry name" value="URACIL PHOSPHORIBOSYLTRANSFERASE, CHLOROPLASTIC"/>
    <property type="match status" value="1"/>
</dbReference>
<dbReference type="Pfam" id="PF14681">
    <property type="entry name" value="UPRTase"/>
    <property type="match status" value="1"/>
</dbReference>
<dbReference type="SUPFAM" id="SSF53271">
    <property type="entry name" value="PRTase-like"/>
    <property type="match status" value="1"/>
</dbReference>
<proteinExistence type="inferred from homology"/>
<keyword id="KW-0021">Allosteric enzyme</keyword>
<keyword id="KW-0328">Glycosyltransferase</keyword>
<keyword id="KW-0342">GTP-binding</keyword>
<keyword id="KW-0460">Magnesium</keyword>
<keyword id="KW-0547">Nucleotide-binding</keyword>
<keyword id="KW-0808">Transferase</keyword>
<reference key="1">
    <citation type="submission" date="2007-05" db="EMBL/GenBank/DDBJ databases">
        <title>Complete sequence of Thermotoga petrophila RKU-1.</title>
        <authorList>
            <consortium name="US DOE Joint Genome Institute"/>
            <person name="Copeland A."/>
            <person name="Lucas S."/>
            <person name="Lapidus A."/>
            <person name="Barry K."/>
            <person name="Glavina del Rio T."/>
            <person name="Dalin E."/>
            <person name="Tice H."/>
            <person name="Pitluck S."/>
            <person name="Sims D."/>
            <person name="Brettin T."/>
            <person name="Bruce D."/>
            <person name="Detter J.C."/>
            <person name="Han C."/>
            <person name="Tapia R."/>
            <person name="Schmutz J."/>
            <person name="Larimer F."/>
            <person name="Land M."/>
            <person name="Hauser L."/>
            <person name="Kyrpides N."/>
            <person name="Mikhailova N."/>
            <person name="Nelson K."/>
            <person name="Gogarten J.P."/>
            <person name="Noll K."/>
            <person name="Richardson P."/>
        </authorList>
    </citation>
    <scope>NUCLEOTIDE SEQUENCE [LARGE SCALE GENOMIC DNA]</scope>
    <source>
        <strain>ATCC BAA-488 / DSM 13995 / JCM 10881 / RKU-1</strain>
    </source>
</reference>
<evidence type="ECO:0000255" key="1">
    <source>
        <dbReference type="HAMAP-Rule" id="MF_01218"/>
    </source>
</evidence>
<protein>
    <recommendedName>
        <fullName evidence="1">Uracil phosphoribosyltransferase</fullName>
        <ecNumber evidence="1">2.4.2.9</ecNumber>
    </recommendedName>
    <alternativeName>
        <fullName evidence="1">UMP pyrophosphorylase</fullName>
    </alternativeName>
    <alternativeName>
        <fullName evidence="1">UPRTase</fullName>
    </alternativeName>
</protein>
<name>UPP_THEP1</name>
<sequence>MKNLVVVDHPLIKHKLTIMRDKNTGPKEFRELLREITLLLAYEATRHLKCEEVEVETPITKTIGYRINDKDVVVVPILRAGLVMADGILELLPNASVGHIGIYRDPETLQAVEYYAKLPPLNDDKEVFLLDPMLATGVSSVKAIEILKENGAKKITLVALIAAPEGVEAVERKYKDVKIYVAALDERLNDHGYIIPGLGDAGDRLFRTK</sequence>
<feature type="chain" id="PRO_1000053807" description="Uracil phosphoribosyltransferase">
    <location>
        <begin position="1"/>
        <end position="209"/>
    </location>
</feature>
<feature type="binding site" evidence="1">
    <location>
        <position position="79"/>
    </location>
    <ligand>
        <name>5-phospho-alpha-D-ribose 1-diphosphate</name>
        <dbReference type="ChEBI" id="CHEBI:58017"/>
    </ligand>
</feature>
<feature type="binding site" evidence="1">
    <location>
        <position position="104"/>
    </location>
    <ligand>
        <name>5-phospho-alpha-D-ribose 1-diphosphate</name>
        <dbReference type="ChEBI" id="CHEBI:58017"/>
    </ligand>
</feature>
<feature type="binding site" evidence="1">
    <location>
        <begin position="131"/>
        <end position="139"/>
    </location>
    <ligand>
        <name>5-phospho-alpha-D-ribose 1-diphosphate</name>
        <dbReference type="ChEBI" id="CHEBI:58017"/>
    </ligand>
</feature>
<feature type="binding site" evidence="1">
    <location>
        <position position="194"/>
    </location>
    <ligand>
        <name>uracil</name>
        <dbReference type="ChEBI" id="CHEBI:17568"/>
    </ligand>
</feature>
<feature type="binding site" evidence="1">
    <location>
        <begin position="199"/>
        <end position="201"/>
    </location>
    <ligand>
        <name>uracil</name>
        <dbReference type="ChEBI" id="CHEBI:17568"/>
    </ligand>
</feature>
<feature type="binding site" evidence="1">
    <location>
        <position position="200"/>
    </location>
    <ligand>
        <name>5-phospho-alpha-D-ribose 1-diphosphate</name>
        <dbReference type="ChEBI" id="CHEBI:58017"/>
    </ligand>
</feature>
<accession>A5IJ64</accession>
<comment type="function">
    <text evidence="1">Catalyzes the conversion of uracil and 5-phospho-alpha-D-ribose 1-diphosphate (PRPP) to UMP and diphosphate.</text>
</comment>
<comment type="catalytic activity">
    <reaction evidence="1">
        <text>UMP + diphosphate = 5-phospho-alpha-D-ribose 1-diphosphate + uracil</text>
        <dbReference type="Rhea" id="RHEA:13017"/>
        <dbReference type="ChEBI" id="CHEBI:17568"/>
        <dbReference type="ChEBI" id="CHEBI:33019"/>
        <dbReference type="ChEBI" id="CHEBI:57865"/>
        <dbReference type="ChEBI" id="CHEBI:58017"/>
        <dbReference type="EC" id="2.4.2.9"/>
    </reaction>
</comment>
<comment type="cofactor">
    <cofactor evidence="1">
        <name>Mg(2+)</name>
        <dbReference type="ChEBI" id="CHEBI:18420"/>
    </cofactor>
    <text evidence="1">Binds 1 Mg(2+) ion per subunit. The magnesium is bound as Mg-PRPP.</text>
</comment>
<comment type="activity regulation">
    <text evidence="1">Allosterically activated by GTP.</text>
</comment>
<comment type="pathway">
    <text evidence="1">Pyrimidine metabolism; UMP biosynthesis via salvage pathway; UMP from uracil: step 1/1.</text>
</comment>
<comment type="similarity">
    <text evidence="1">Belongs to the UPRTase family.</text>
</comment>
<gene>
    <name evidence="1" type="primary">upp</name>
    <name type="ordered locus">Tpet_0208</name>
</gene>